<accession>P68821</accession>
<accession>Q9Z5C4</accession>
<sequence length="396" mass="42602">MAKKIVSDLDLKGKTVLVRADFNVPLKDGEITNDNRIVQALPTIQYIIEQGGKIVLFSHLGKVKEESDKAKLTLRPVAEDLSKKLDKEVVFVPETRGEKLEAAIKDLKEGDVLLVENTRYEDLDGKKESKNDPELGKYWASLGDVFVNDAFGTAHREHASNVGISTHLETAAGFLMDKEIKFIGGVVNDPHKPVVAILGGAKVSDKINVIKNLVNIADKIIIGGGMAYTFLKAQGKEIGISLLEEDKIDFAKDLLEKHGDKIVLPVDTKVAKEFSNDAKITVVPSDSIPADQEGMDIGPNTVKLFADELEGAHTVVWNGPMGVFEFSNFAQGTIGVCKAIANLKDAITIIGGGDSAAAAISLGFENDFTHISTGGGASLEYLEGKELPGIKAINNK</sequence>
<name>PGK_STAAW</name>
<evidence type="ECO:0000250" key="1"/>
<evidence type="ECO:0000305" key="2"/>
<gene>
    <name type="primary">pgk</name>
    <name type="ordered locus">MW0735</name>
</gene>
<keyword id="KW-0067">ATP-binding</keyword>
<keyword id="KW-0963">Cytoplasm</keyword>
<keyword id="KW-0324">Glycolysis</keyword>
<keyword id="KW-0418">Kinase</keyword>
<keyword id="KW-0547">Nucleotide-binding</keyword>
<keyword id="KW-0808">Transferase</keyword>
<reference key="1">
    <citation type="journal article" date="2002" name="Lancet">
        <title>Genome and virulence determinants of high virulence community-acquired MRSA.</title>
        <authorList>
            <person name="Baba T."/>
            <person name="Takeuchi F."/>
            <person name="Kuroda M."/>
            <person name="Yuzawa H."/>
            <person name="Aoki K."/>
            <person name="Oguchi A."/>
            <person name="Nagai Y."/>
            <person name="Iwama N."/>
            <person name="Asano K."/>
            <person name="Naimi T."/>
            <person name="Kuroda H."/>
            <person name="Cui L."/>
            <person name="Yamamoto K."/>
            <person name="Hiramatsu K."/>
        </authorList>
    </citation>
    <scope>NUCLEOTIDE SEQUENCE [LARGE SCALE GENOMIC DNA]</scope>
    <source>
        <strain>MW2</strain>
    </source>
</reference>
<protein>
    <recommendedName>
        <fullName>Phosphoglycerate kinase</fullName>
        <ecNumber>2.7.2.3</ecNumber>
    </recommendedName>
</protein>
<comment type="catalytic activity">
    <reaction>
        <text>(2R)-3-phosphoglycerate + ATP = (2R)-3-phospho-glyceroyl phosphate + ADP</text>
        <dbReference type="Rhea" id="RHEA:14801"/>
        <dbReference type="ChEBI" id="CHEBI:30616"/>
        <dbReference type="ChEBI" id="CHEBI:57604"/>
        <dbReference type="ChEBI" id="CHEBI:58272"/>
        <dbReference type="ChEBI" id="CHEBI:456216"/>
        <dbReference type="EC" id="2.7.2.3"/>
    </reaction>
</comment>
<comment type="pathway">
    <text>Carbohydrate degradation; glycolysis; pyruvate from D-glyceraldehyde 3-phosphate: step 2/5.</text>
</comment>
<comment type="subunit">
    <text evidence="1">Monomer.</text>
</comment>
<comment type="subcellular location">
    <subcellularLocation>
        <location evidence="2">Cytoplasm</location>
    </subcellularLocation>
</comment>
<comment type="similarity">
    <text evidence="2">Belongs to the phosphoglycerate kinase family.</text>
</comment>
<feature type="chain" id="PRO_0000146007" description="Phosphoglycerate kinase">
    <location>
        <begin position="1"/>
        <end position="396"/>
    </location>
</feature>
<feature type="binding site" evidence="1">
    <location>
        <begin position="21"/>
        <end position="23"/>
    </location>
    <ligand>
        <name>substrate</name>
    </ligand>
</feature>
<feature type="binding site" evidence="1">
    <location>
        <position position="36"/>
    </location>
    <ligand>
        <name>substrate</name>
    </ligand>
</feature>
<feature type="binding site" evidence="1">
    <location>
        <begin position="59"/>
        <end position="62"/>
    </location>
    <ligand>
        <name>substrate</name>
    </ligand>
</feature>
<feature type="binding site" evidence="1">
    <location>
        <position position="119"/>
    </location>
    <ligand>
        <name>substrate</name>
    </ligand>
</feature>
<feature type="binding site" evidence="1">
    <location>
        <position position="156"/>
    </location>
    <ligand>
        <name>substrate</name>
    </ligand>
</feature>
<feature type="binding site" evidence="1">
    <location>
        <position position="206"/>
    </location>
    <ligand>
        <name>ATP</name>
        <dbReference type="ChEBI" id="CHEBI:30616"/>
    </ligand>
</feature>
<feature type="binding site" evidence="1">
    <location>
        <position position="294"/>
    </location>
    <ligand>
        <name>ATP</name>
        <dbReference type="ChEBI" id="CHEBI:30616"/>
    </ligand>
</feature>
<feature type="binding site" evidence="1">
    <location>
        <position position="325"/>
    </location>
    <ligand>
        <name>ATP</name>
        <dbReference type="ChEBI" id="CHEBI:30616"/>
    </ligand>
</feature>
<feature type="binding site" evidence="1">
    <location>
        <begin position="352"/>
        <end position="355"/>
    </location>
    <ligand>
        <name>ATP</name>
        <dbReference type="ChEBI" id="CHEBI:30616"/>
    </ligand>
</feature>
<organism>
    <name type="scientific">Staphylococcus aureus (strain MW2)</name>
    <dbReference type="NCBI Taxonomy" id="196620"/>
    <lineage>
        <taxon>Bacteria</taxon>
        <taxon>Bacillati</taxon>
        <taxon>Bacillota</taxon>
        <taxon>Bacilli</taxon>
        <taxon>Bacillales</taxon>
        <taxon>Staphylococcaceae</taxon>
        <taxon>Staphylococcus</taxon>
    </lineage>
</organism>
<dbReference type="EC" id="2.7.2.3"/>
<dbReference type="EMBL" id="BA000033">
    <property type="protein sequence ID" value="BAB94600.1"/>
    <property type="molecule type" value="Genomic_DNA"/>
</dbReference>
<dbReference type="RefSeq" id="WP_001074749.1">
    <property type="nucleotide sequence ID" value="NC_003923.1"/>
</dbReference>
<dbReference type="SMR" id="P68821"/>
<dbReference type="KEGG" id="sam:MW0735"/>
<dbReference type="HOGENOM" id="CLU_025427_0_2_9"/>
<dbReference type="UniPathway" id="UPA00109">
    <property type="reaction ID" value="UER00185"/>
</dbReference>
<dbReference type="GO" id="GO:0005829">
    <property type="term" value="C:cytosol"/>
    <property type="evidence" value="ECO:0007669"/>
    <property type="project" value="TreeGrafter"/>
</dbReference>
<dbReference type="GO" id="GO:0043531">
    <property type="term" value="F:ADP binding"/>
    <property type="evidence" value="ECO:0007669"/>
    <property type="project" value="TreeGrafter"/>
</dbReference>
<dbReference type="GO" id="GO:0005524">
    <property type="term" value="F:ATP binding"/>
    <property type="evidence" value="ECO:0007669"/>
    <property type="project" value="UniProtKB-KW"/>
</dbReference>
<dbReference type="GO" id="GO:0004618">
    <property type="term" value="F:phosphoglycerate kinase activity"/>
    <property type="evidence" value="ECO:0007669"/>
    <property type="project" value="UniProtKB-UniRule"/>
</dbReference>
<dbReference type="GO" id="GO:0006094">
    <property type="term" value="P:gluconeogenesis"/>
    <property type="evidence" value="ECO:0007669"/>
    <property type="project" value="TreeGrafter"/>
</dbReference>
<dbReference type="GO" id="GO:0006096">
    <property type="term" value="P:glycolytic process"/>
    <property type="evidence" value="ECO:0007669"/>
    <property type="project" value="UniProtKB-UniRule"/>
</dbReference>
<dbReference type="CDD" id="cd00318">
    <property type="entry name" value="Phosphoglycerate_kinase"/>
    <property type="match status" value="1"/>
</dbReference>
<dbReference type="FunFam" id="3.40.50.1260:FF:000001">
    <property type="entry name" value="Phosphoglycerate kinase"/>
    <property type="match status" value="1"/>
</dbReference>
<dbReference type="FunFam" id="3.40.50.1260:FF:000008">
    <property type="entry name" value="Phosphoglycerate kinase"/>
    <property type="match status" value="1"/>
</dbReference>
<dbReference type="Gene3D" id="3.40.50.1260">
    <property type="entry name" value="Phosphoglycerate kinase, N-terminal domain"/>
    <property type="match status" value="2"/>
</dbReference>
<dbReference type="HAMAP" id="MF_00145">
    <property type="entry name" value="Phosphoglyc_kinase"/>
    <property type="match status" value="1"/>
</dbReference>
<dbReference type="InterPro" id="IPR001576">
    <property type="entry name" value="Phosphoglycerate_kinase"/>
</dbReference>
<dbReference type="InterPro" id="IPR015911">
    <property type="entry name" value="Phosphoglycerate_kinase_CS"/>
</dbReference>
<dbReference type="InterPro" id="IPR015824">
    <property type="entry name" value="Phosphoglycerate_kinase_N"/>
</dbReference>
<dbReference type="InterPro" id="IPR036043">
    <property type="entry name" value="Phosphoglycerate_kinase_sf"/>
</dbReference>
<dbReference type="PANTHER" id="PTHR11406">
    <property type="entry name" value="PHOSPHOGLYCERATE KINASE"/>
    <property type="match status" value="1"/>
</dbReference>
<dbReference type="PANTHER" id="PTHR11406:SF23">
    <property type="entry name" value="PHOSPHOGLYCERATE KINASE 1, CHLOROPLASTIC-RELATED"/>
    <property type="match status" value="1"/>
</dbReference>
<dbReference type="Pfam" id="PF00162">
    <property type="entry name" value="PGK"/>
    <property type="match status" value="1"/>
</dbReference>
<dbReference type="PIRSF" id="PIRSF000724">
    <property type="entry name" value="Pgk"/>
    <property type="match status" value="1"/>
</dbReference>
<dbReference type="PRINTS" id="PR00477">
    <property type="entry name" value="PHGLYCKINASE"/>
</dbReference>
<dbReference type="SUPFAM" id="SSF53748">
    <property type="entry name" value="Phosphoglycerate kinase"/>
    <property type="match status" value="1"/>
</dbReference>
<dbReference type="PROSITE" id="PS00111">
    <property type="entry name" value="PGLYCERATE_KINASE"/>
    <property type="match status" value="1"/>
</dbReference>
<proteinExistence type="inferred from homology"/>